<sequence length="469" mass="51865">MTRPVRTRFAPSPTGFIHLGNIRSALYPWAFARKMKGTFVLRIEDTDVERSSQEAVDAILEGMQWLGLDFDEGPIYQMQRMDRYREVLAQMLEQGLAYPCYMSAEELDALRERQREAGLKPRYDGTWRPEPGKVLPEPPAGVKPVLRFRNPLTGTVVWDDAVKGRVEISNEELDDLVIARPDGTPIYNFCVVVDDMDMNITHVIRGDDHVNNTPRQINILRALGGEPPVYAHLPTVLNEQGEKMSKRHGAMSVMAYRDAGFLPEAVVNYLARLGWSHGDAEIFSREQFVEWFDLEHLGKSPAQYDHSKLSWLNAHYIKEADNARLAALAKPFLDALGIEDAAIATGPALDAVVGLMKDRATTVKEIAEGAAMFYRVPAPDADALAQHVTDAVRPALADLAAALKAADWTKEAVSAALKATLGTHKLKMPQLAMPVRLLVAGTTHTPSIDAVLVLFGRDVVVSRIEAALA</sequence>
<protein>
    <recommendedName>
        <fullName evidence="1">Glutamate--tRNA ligase</fullName>
        <ecNumber evidence="1">6.1.1.17</ecNumber>
    </recommendedName>
    <alternativeName>
        <fullName evidence="1">Glutamyl-tRNA synthetase</fullName>
        <shortName evidence="1">GluRS</shortName>
    </alternativeName>
</protein>
<comment type="function">
    <text evidence="1">Catalyzes the attachment of glutamate to tRNA(Glu) in a two-step reaction: glutamate is first activated by ATP to form Glu-AMP and then transferred to the acceptor end of tRNA(Glu).</text>
</comment>
<comment type="catalytic activity">
    <reaction evidence="1">
        <text>tRNA(Glu) + L-glutamate + ATP = L-glutamyl-tRNA(Glu) + AMP + diphosphate</text>
        <dbReference type="Rhea" id="RHEA:23540"/>
        <dbReference type="Rhea" id="RHEA-COMP:9663"/>
        <dbReference type="Rhea" id="RHEA-COMP:9680"/>
        <dbReference type="ChEBI" id="CHEBI:29985"/>
        <dbReference type="ChEBI" id="CHEBI:30616"/>
        <dbReference type="ChEBI" id="CHEBI:33019"/>
        <dbReference type="ChEBI" id="CHEBI:78442"/>
        <dbReference type="ChEBI" id="CHEBI:78520"/>
        <dbReference type="ChEBI" id="CHEBI:456215"/>
        <dbReference type="EC" id="6.1.1.17"/>
    </reaction>
</comment>
<comment type="subunit">
    <text evidence="1">Monomer.</text>
</comment>
<comment type="subcellular location">
    <subcellularLocation>
        <location evidence="1">Cytoplasm</location>
    </subcellularLocation>
</comment>
<comment type="similarity">
    <text evidence="1">Belongs to the class-I aminoacyl-tRNA synthetase family. Glutamate--tRNA ligase type 1 subfamily.</text>
</comment>
<proteinExistence type="inferred from homology"/>
<evidence type="ECO:0000255" key="1">
    <source>
        <dbReference type="HAMAP-Rule" id="MF_00022"/>
    </source>
</evidence>
<gene>
    <name evidence="1" type="primary">gltX</name>
    <name type="ordered locus">BamMC406_1958</name>
</gene>
<feature type="chain" id="PRO_1000090055" description="Glutamate--tRNA ligase">
    <location>
        <begin position="1"/>
        <end position="469"/>
    </location>
</feature>
<feature type="short sequence motif" description="'HIGH' region" evidence="1">
    <location>
        <begin position="11"/>
        <end position="21"/>
    </location>
</feature>
<feature type="short sequence motif" description="'KMSKS' region" evidence="1">
    <location>
        <begin position="243"/>
        <end position="247"/>
    </location>
</feature>
<feature type="binding site" evidence="1">
    <location>
        <position position="246"/>
    </location>
    <ligand>
        <name>ATP</name>
        <dbReference type="ChEBI" id="CHEBI:30616"/>
    </ligand>
</feature>
<organism>
    <name type="scientific">Burkholderia ambifaria (strain MC40-6)</name>
    <dbReference type="NCBI Taxonomy" id="398577"/>
    <lineage>
        <taxon>Bacteria</taxon>
        <taxon>Pseudomonadati</taxon>
        <taxon>Pseudomonadota</taxon>
        <taxon>Betaproteobacteria</taxon>
        <taxon>Burkholderiales</taxon>
        <taxon>Burkholderiaceae</taxon>
        <taxon>Burkholderia</taxon>
        <taxon>Burkholderia cepacia complex</taxon>
    </lineage>
</organism>
<accession>B1YSK3</accession>
<keyword id="KW-0030">Aminoacyl-tRNA synthetase</keyword>
<keyword id="KW-0067">ATP-binding</keyword>
<keyword id="KW-0963">Cytoplasm</keyword>
<keyword id="KW-0436">Ligase</keyword>
<keyword id="KW-0547">Nucleotide-binding</keyword>
<keyword id="KW-0648">Protein biosynthesis</keyword>
<dbReference type="EC" id="6.1.1.17" evidence="1"/>
<dbReference type="EMBL" id="CP001025">
    <property type="protein sequence ID" value="ACB64439.1"/>
    <property type="molecule type" value="Genomic_DNA"/>
</dbReference>
<dbReference type="RefSeq" id="WP_012364162.1">
    <property type="nucleotide sequence ID" value="NC_010551.1"/>
</dbReference>
<dbReference type="SMR" id="B1YSK3"/>
<dbReference type="KEGG" id="bac:BamMC406_1958"/>
<dbReference type="HOGENOM" id="CLU_015768_6_0_4"/>
<dbReference type="OrthoDB" id="9807503at2"/>
<dbReference type="Proteomes" id="UP000001680">
    <property type="component" value="Chromosome 1"/>
</dbReference>
<dbReference type="GO" id="GO:0005829">
    <property type="term" value="C:cytosol"/>
    <property type="evidence" value="ECO:0007669"/>
    <property type="project" value="TreeGrafter"/>
</dbReference>
<dbReference type="GO" id="GO:0005524">
    <property type="term" value="F:ATP binding"/>
    <property type="evidence" value="ECO:0007669"/>
    <property type="project" value="UniProtKB-UniRule"/>
</dbReference>
<dbReference type="GO" id="GO:0004818">
    <property type="term" value="F:glutamate-tRNA ligase activity"/>
    <property type="evidence" value="ECO:0007669"/>
    <property type="project" value="UniProtKB-UniRule"/>
</dbReference>
<dbReference type="GO" id="GO:0000049">
    <property type="term" value="F:tRNA binding"/>
    <property type="evidence" value="ECO:0007669"/>
    <property type="project" value="InterPro"/>
</dbReference>
<dbReference type="GO" id="GO:0008270">
    <property type="term" value="F:zinc ion binding"/>
    <property type="evidence" value="ECO:0007669"/>
    <property type="project" value="InterPro"/>
</dbReference>
<dbReference type="GO" id="GO:0006424">
    <property type="term" value="P:glutamyl-tRNA aminoacylation"/>
    <property type="evidence" value="ECO:0007669"/>
    <property type="project" value="UniProtKB-UniRule"/>
</dbReference>
<dbReference type="CDD" id="cd00808">
    <property type="entry name" value="GluRS_core"/>
    <property type="match status" value="1"/>
</dbReference>
<dbReference type="FunFam" id="3.40.50.620:FF:000007">
    <property type="entry name" value="Glutamate--tRNA ligase"/>
    <property type="match status" value="1"/>
</dbReference>
<dbReference type="Gene3D" id="1.10.10.350">
    <property type="match status" value="1"/>
</dbReference>
<dbReference type="Gene3D" id="1.10.8.70">
    <property type="entry name" value="Glutamate-tRNA synthetase, class I, anticodon-binding domain 1"/>
    <property type="match status" value="1"/>
</dbReference>
<dbReference type="Gene3D" id="3.40.50.620">
    <property type="entry name" value="HUPs"/>
    <property type="match status" value="1"/>
</dbReference>
<dbReference type="HAMAP" id="MF_00022">
    <property type="entry name" value="Glu_tRNA_synth_type1"/>
    <property type="match status" value="1"/>
</dbReference>
<dbReference type="InterPro" id="IPR045462">
    <property type="entry name" value="aa-tRNA-synth_I_cd-bd"/>
</dbReference>
<dbReference type="InterPro" id="IPR020751">
    <property type="entry name" value="aa-tRNA-synth_I_codon-bd_sub2"/>
</dbReference>
<dbReference type="InterPro" id="IPR001412">
    <property type="entry name" value="aa-tRNA-synth_I_CS"/>
</dbReference>
<dbReference type="InterPro" id="IPR008925">
    <property type="entry name" value="aa_tRNA-synth_I_cd-bd_sf"/>
</dbReference>
<dbReference type="InterPro" id="IPR004527">
    <property type="entry name" value="Glu-tRNA-ligase_bac/mito"/>
</dbReference>
<dbReference type="InterPro" id="IPR020752">
    <property type="entry name" value="Glu-tRNA-synth_I_codon-bd_sub1"/>
</dbReference>
<dbReference type="InterPro" id="IPR000924">
    <property type="entry name" value="Glu/Gln-tRNA-synth"/>
</dbReference>
<dbReference type="InterPro" id="IPR020058">
    <property type="entry name" value="Glu/Gln-tRNA-synth_Ib_cat-dom"/>
</dbReference>
<dbReference type="InterPro" id="IPR049940">
    <property type="entry name" value="GluQ/Sye"/>
</dbReference>
<dbReference type="InterPro" id="IPR033910">
    <property type="entry name" value="GluRS_core"/>
</dbReference>
<dbReference type="InterPro" id="IPR014729">
    <property type="entry name" value="Rossmann-like_a/b/a_fold"/>
</dbReference>
<dbReference type="NCBIfam" id="TIGR00464">
    <property type="entry name" value="gltX_bact"/>
    <property type="match status" value="1"/>
</dbReference>
<dbReference type="PANTHER" id="PTHR43311">
    <property type="entry name" value="GLUTAMATE--TRNA LIGASE"/>
    <property type="match status" value="1"/>
</dbReference>
<dbReference type="PANTHER" id="PTHR43311:SF2">
    <property type="entry name" value="GLUTAMATE--TRNA LIGASE, MITOCHONDRIAL-RELATED"/>
    <property type="match status" value="1"/>
</dbReference>
<dbReference type="Pfam" id="PF19269">
    <property type="entry name" value="Anticodon_2"/>
    <property type="match status" value="1"/>
</dbReference>
<dbReference type="Pfam" id="PF00749">
    <property type="entry name" value="tRNA-synt_1c"/>
    <property type="match status" value="1"/>
</dbReference>
<dbReference type="PRINTS" id="PR00987">
    <property type="entry name" value="TRNASYNTHGLU"/>
</dbReference>
<dbReference type="SUPFAM" id="SSF48163">
    <property type="entry name" value="An anticodon-binding domain of class I aminoacyl-tRNA synthetases"/>
    <property type="match status" value="1"/>
</dbReference>
<dbReference type="SUPFAM" id="SSF52374">
    <property type="entry name" value="Nucleotidylyl transferase"/>
    <property type="match status" value="1"/>
</dbReference>
<dbReference type="PROSITE" id="PS00178">
    <property type="entry name" value="AA_TRNA_LIGASE_I"/>
    <property type="match status" value="1"/>
</dbReference>
<reference key="1">
    <citation type="submission" date="2008-04" db="EMBL/GenBank/DDBJ databases">
        <title>Complete sequence of chromosome 1 of Burkholderia ambifaria MC40-6.</title>
        <authorList>
            <person name="Copeland A."/>
            <person name="Lucas S."/>
            <person name="Lapidus A."/>
            <person name="Glavina del Rio T."/>
            <person name="Dalin E."/>
            <person name="Tice H."/>
            <person name="Pitluck S."/>
            <person name="Chain P."/>
            <person name="Malfatti S."/>
            <person name="Shin M."/>
            <person name="Vergez L."/>
            <person name="Lang D."/>
            <person name="Schmutz J."/>
            <person name="Larimer F."/>
            <person name="Land M."/>
            <person name="Hauser L."/>
            <person name="Kyrpides N."/>
            <person name="Lykidis A."/>
            <person name="Ramette A."/>
            <person name="Konstantinidis K."/>
            <person name="Tiedje J."/>
            <person name="Richardson P."/>
        </authorList>
    </citation>
    <scope>NUCLEOTIDE SEQUENCE [LARGE SCALE GENOMIC DNA]</scope>
    <source>
        <strain>MC40-6</strain>
    </source>
</reference>
<name>SYE_BURA4</name>